<dbReference type="EC" id="3.6.5.3" evidence="2"/>
<dbReference type="EMBL" id="BX548174">
    <property type="protein sequence ID" value="CAE19967.1"/>
    <property type="molecule type" value="Genomic_DNA"/>
</dbReference>
<dbReference type="RefSeq" id="WP_011133136.1">
    <property type="nucleotide sequence ID" value="NC_005072.1"/>
</dbReference>
<dbReference type="SMR" id="Q7UZY7"/>
<dbReference type="STRING" id="59919.PMM1508"/>
<dbReference type="KEGG" id="pmm:PMM1508"/>
<dbReference type="eggNOG" id="COG0050">
    <property type="taxonomic scope" value="Bacteria"/>
</dbReference>
<dbReference type="HOGENOM" id="CLU_007265_0_1_3"/>
<dbReference type="OrthoDB" id="9804504at2"/>
<dbReference type="Proteomes" id="UP000001026">
    <property type="component" value="Chromosome"/>
</dbReference>
<dbReference type="GO" id="GO:0005829">
    <property type="term" value="C:cytosol"/>
    <property type="evidence" value="ECO:0007669"/>
    <property type="project" value="TreeGrafter"/>
</dbReference>
<dbReference type="GO" id="GO:0005525">
    <property type="term" value="F:GTP binding"/>
    <property type="evidence" value="ECO:0007669"/>
    <property type="project" value="UniProtKB-UniRule"/>
</dbReference>
<dbReference type="GO" id="GO:0003924">
    <property type="term" value="F:GTPase activity"/>
    <property type="evidence" value="ECO:0007669"/>
    <property type="project" value="InterPro"/>
</dbReference>
<dbReference type="GO" id="GO:0003746">
    <property type="term" value="F:translation elongation factor activity"/>
    <property type="evidence" value="ECO:0007669"/>
    <property type="project" value="UniProtKB-UniRule"/>
</dbReference>
<dbReference type="CDD" id="cd01884">
    <property type="entry name" value="EF_Tu"/>
    <property type="match status" value="1"/>
</dbReference>
<dbReference type="CDD" id="cd03697">
    <property type="entry name" value="EFTU_II"/>
    <property type="match status" value="1"/>
</dbReference>
<dbReference type="CDD" id="cd03707">
    <property type="entry name" value="EFTU_III"/>
    <property type="match status" value="1"/>
</dbReference>
<dbReference type="FunFam" id="2.40.30.10:FF:000001">
    <property type="entry name" value="Elongation factor Tu"/>
    <property type="match status" value="1"/>
</dbReference>
<dbReference type="FunFam" id="2.40.30.10:FF:000046">
    <property type="entry name" value="Elongation factor Tu"/>
    <property type="match status" value="1"/>
</dbReference>
<dbReference type="FunFam" id="3.40.50.300:FF:000003">
    <property type="entry name" value="Elongation factor Tu"/>
    <property type="match status" value="1"/>
</dbReference>
<dbReference type="Gene3D" id="3.40.50.300">
    <property type="entry name" value="P-loop containing nucleotide triphosphate hydrolases"/>
    <property type="match status" value="1"/>
</dbReference>
<dbReference type="Gene3D" id="2.40.30.10">
    <property type="entry name" value="Translation factors"/>
    <property type="match status" value="2"/>
</dbReference>
<dbReference type="HAMAP" id="MF_00118_B">
    <property type="entry name" value="EF_Tu_B"/>
    <property type="match status" value="1"/>
</dbReference>
<dbReference type="InterPro" id="IPR041709">
    <property type="entry name" value="EF-Tu_GTP-bd"/>
</dbReference>
<dbReference type="InterPro" id="IPR050055">
    <property type="entry name" value="EF-Tu_GTPase"/>
</dbReference>
<dbReference type="InterPro" id="IPR004161">
    <property type="entry name" value="EFTu-like_2"/>
</dbReference>
<dbReference type="InterPro" id="IPR033720">
    <property type="entry name" value="EFTU_2"/>
</dbReference>
<dbReference type="InterPro" id="IPR031157">
    <property type="entry name" value="G_TR_CS"/>
</dbReference>
<dbReference type="InterPro" id="IPR027417">
    <property type="entry name" value="P-loop_NTPase"/>
</dbReference>
<dbReference type="InterPro" id="IPR005225">
    <property type="entry name" value="Small_GTP-bd"/>
</dbReference>
<dbReference type="InterPro" id="IPR000795">
    <property type="entry name" value="T_Tr_GTP-bd_dom"/>
</dbReference>
<dbReference type="InterPro" id="IPR009000">
    <property type="entry name" value="Transl_B-barrel_sf"/>
</dbReference>
<dbReference type="InterPro" id="IPR009001">
    <property type="entry name" value="Transl_elong_EF1A/Init_IF2_C"/>
</dbReference>
<dbReference type="InterPro" id="IPR004541">
    <property type="entry name" value="Transl_elong_EFTu/EF1A_bac/org"/>
</dbReference>
<dbReference type="InterPro" id="IPR004160">
    <property type="entry name" value="Transl_elong_EFTu/EF1A_C"/>
</dbReference>
<dbReference type="NCBIfam" id="TIGR00485">
    <property type="entry name" value="EF-Tu"/>
    <property type="match status" value="1"/>
</dbReference>
<dbReference type="NCBIfam" id="NF000766">
    <property type="entry name" value="PRK00049.1"/>
    <property type="match status" value="1"/>
</dbReference>
<dbReference type="NCBIfam" id="NF009372">
    <property type="entry name" value="PRK12735.1"/>
    <property type="match status" value="1"/>
</dbReference>
<dbReference type="NCBIfam" id="NF009373">
    <property type="entry name" value="PRK12736.1"/>
    <property type="match status" value="1"/>
</dbReference>
<dbReference type="NCBIfam" id="TIGR00231">
    <property type="entry name" value="small_GTP"/>
    <property type="match status" value="1"/>
</dbReference>
<dbReference type="PANTHER" id="PTHR43721:SF22">
    <property type="entry name" value="ELONGATION FACTOR TU, MITOCHONDRIAL"/>
    <property type="match status" value="1"/>
</dbReference>
<dbReference type="PANTHER" id="PTHR43721">
    <property type="entry name" value="ELONGATION FACTOR TU-RELATED"/>
    <property type="match status" value="1"/>
</dbReference>
<dbReference type="Pfam" id="PF00009">
    <property type="entry name" value="GTP_EFTU"/>
    <property type="match status" value="1"/>
</dbReference>
<dbReference type="Pfam" id="PF03144">
    <property type="entry name" value="GTP_EFTU_D2"/>
    <property type="match status" value="1"/>
</dbReference>
<dbReference type="Pfam" id="PF03143">
    <property type="entry name" value="GTP_EFTU_D3"/>
    <property type="match status" value="1"/>
</dbReference>
<dbReference type="PRINTS" id="PR00315">
    <property type="entry name" value="ELONGATNFCT"/>
</dbReference>
<dbReference type="SUPFAM" id="SSF50465">
    <property type="entry name" value="EF-Tu/eEF-1alpha/eIF2-gamma C-terminal domain"/>
    <property type="match status" value="1"/>
</dbReference>
<dbReference type="SUPFAM" id="SSF52540">
    <property type="entry name" value="P-loop containing nucleoside triphosphate hydrolases"/>
    <property type="match status" value="1"/>
</dbReference>
<dbReference type="SUPFAM" id="SSF50447">
    <property type="entry name" value="Translation proteins"/>
    <property type="match status" value="1"/>
</dbReference>
<dbReference type="PROSITE" id="PS00301">
    <property type="entry name" value="G_TR_1"/>
    <property type="match status" value="1"/>
</dbReference>
<dbReference type="PROSITE" id="PS51722">
    <property type="entry name" value="G_TR_2"/>
    <property type="match status" value="1"/>
</dbReference>
<reference key="1">
    <citation type="journal article" date="2003" name="Nature">
        <title>Genome divergence in two Prochlorococcus ecotypes reflects oceanic niche differentiation.</title>
        <authorList>
            <person name="Rocap G."/>
            <person name="Larimer F.W."/>
            <person name="Lamerdin J.E."/>
            <person name="Malfatti S."/>
            <person name="Chain P."/>
            <person name="Ahlgren N.A."/>
            <person name="Arellano A."/>
            <person name="Coleman M."/>
            <person name="Hauser L."/>
            <person name="Hess W.R."/>
            <person name="Johnson Z.I."/>
            <person name="Land M.L."/>
            <person name="Lindell D."/>
            <person name="Post A.F."/>
            <person name="Regala W."/>
            <person name="Shah M."/>
            <person name="Shaw S.L."/>
            <person name="Steglich C."/>
            <person name="Sullivan M.B."/>
            <person name="Ting C.S."/>
            <person name="Tolonen A."/>
            <person name="Webb E.A."/>
            <person name="Zinser E.R."/>
            <person name="Chisholm S.W."/>
        </authorList>
    </citation>
    <scope>NUCLEOTIDE SEQUENCE [LARGE SCALE GENOMIC DNA]</scope>
    <source>
        <strain>CCMP1986 / NIES-2087 / MED4</strain>
    </source>
</reference>
<accession>Q7UZY7</accession>
<evidence type="ECO:0000250" key="1"/>
<evidence type="ECO:0000255" key="2">
    <source>
        <dbReference type="HAMAP-Rule" id="MF_00118"/>
    </source>
</evidence>
<sequence>MAREKFERNKPHVNIGTIGHVDHGKTTLTAAITNVLAKKGQAQAQDYGDIDGAPEERERGITINTAHVEYETAERHYAHVDCPGHADYVKNMITGAAQMDGAILVCAATDGPMAQTKEHILLAKQVGVPALVVALNKCDMVDDEEIIELVEMEIRELLDSYDFPGDDIPIVQVSGLKALEGDSTWESKIEELMTAVDASIPEPEREIDKPFLMAVEDVFSITGRGTVATGRIERGKVKVGEEVEIVGIRDTRLTTVTGVEMFRKLLDEGMAGDNVGLLLRGVQKEDIERGMVLVKKGSITPHTKFEGEVYVLKKEEGGRHTPFFAGYRPQFYIRTTDVTGQITAFTADDGANVEMVMPGDRIKMTGELICPVAIEQGMRFAIREGGRTIGAGVVSKIIE</sequence>
<organism>
    <name type="scientific">Prochlorococcus marinus subsp. pastoris (strain CCMP1986 / NIES-2087 / MED4)</name>
    <dbReference type="NCBI Taxonomy" id="59919"/>
    <lineage>
        <taxon>Bacteria</taxon>
        <taxon>Bacillati</taxon>
        <taxon>Cyanobacteriota</taxon>
        <taxon>Cyanophyceae</taxon>
        <taxon>Synechococcales</taxon>
        <taxon>Prochlorococcaceae</taxon>
        <taxon>Prochlorococcus</taxon>
    </lineage>
</organism>
<keyword id="KW-0963">Cytoplasm</keyword>
<keyword id="KW-0251">Elongation factor</keyword>
<keyword id="KW-0342">GTP-binding</keyword>
<keyword id="KW-0378">Hydrolase</keyword>
<keyword id="KW-0460">Magnesium</keyword>
<keyword id="KW-0479">Metal-binding</keyword>
<keyword id="KW-0547">Nucleotide-binding</keyword>
<keyword id="KW-0648">Protein biosynthesis</keyword>
<feature type="chain" id="PRO_1000015730" description="Elongation factor Tu">
    <location>
        <begin position="1"/>
        <end position="399"/>
    </location>
</feature>
<feature type="domain" description="tr-type G">
    <location>
        <begin position="10"/>
        <end position="204"/>
    </location>
</feature>
<feature type="region of interest" description="G1" evidence="1">
    <location>
        <begin position="19"/>
        <end position="26"/>
    </location>
</feature>
<feature type="region of interest" description="G2" evidence="1">
    <location>
        <begin position="60"/>
        <end position="64"/>
    </location>
</feature>
<feature type="region of interest" description="G3" evidence="1">
    <location>
        <begin position="81"/>
        <end position="84"/>
    </location>
</feature>
<feature type="region of interest" description="G4" evidence="1">
    <location>
        <begin position="136"/>
        <end position="139"/>
    </location>
</feature>
<feature type="region of interest" description="G5" evidence="1">
    <location>
        <begin position="174"/>
        <end position="176"/>
    </location>
</feature>
<feature type="binding site" evidence="2">
    <location>
        <begin position="19"/>
        <end position="26"/>
    </location>
    <ligand>
        <name>GTP</name>
        <dbReference type="ChEBI" id="CHEBI:37565"/>
    </ligand>
</feature>
<feature type="binding site" evidence="2">
    <location>
        <position position="26"/>
    </location>
    <ligand>
        <name>Mg(2+)</name>
        <dbReference type="ChEBI" id="CHEBI:18420"/>
    </ligand>
</feature>
<feature type="binding site" evidence="2">
    <location>
        <begin position="81"/>
        <end position="85"/>
    </location>
    <ligand>
        <name>GTP</name>
        <dbReference type="ChEBI" id="CHEBI:37565"/>
    </ligand>
</feature>
<feature type="binding site" evidence="2">
    <location>
        <begin position="136"/>
        <end position="139"/>
    </location>
    <ligand>
        <name>GTP</name>
        <dbReference type="ChEBI" id="CHEBI:37565"/>
    </ligand>
</feature>
<name>EFTU_PROMP</name>
<comment type="function">
    <text evidence="2">GTP hydrolase that promotes the GTP-dependent binding of aminoacyl-tRNA to the A-site of ribosomes during protein biosynthesis.</text>
</comment>
<comment type="catalytic activity">
    <reaction evidence="2">
        <text>GTP + H2O = GDP + phosphate + H(+)</text>
        <dbReference type="Rhea" id="RHEA:19669"/>
        <dbReference type="ChEBI" id="CHEBI:15377"/>
        <dbReference type="ChEBI" id="CHEBI:15378"/>
        <dbReference type="ChEBI" id="CHEBI:37565"/>
        <dbReference type="ChEBI" id="CHEBI:43474"/>
        <dbReference type="ChEBI" id="CHEBI:58189"/>
        <dbReference type="EC" id="3.6.5.3"/>
    </reaction>
    <physiologicalReaction direction="left-to-right" evidence="2">
        <dbReference type="Rhea" id="RHEA:19670"/>
    </physiologicalReaction>
</comment>
<comment type="subunit">
    <text evidence="2">Monomer.</text>
</comment>
<comment type="subcellular location">
    <subcellularLocation>
        <location evidence="2">Cytoplasm</location>
    </subcellularLocation>
</comment>
<comment type="similarity">
    <text evidence="2">Belongs to the TRAFAC class translation factor GTPase superfamily. Classic translation factor GTPase family. EF-Tu/EF-1A subfamily.</text>
</comment>
<gene>
    <name evidence="2" type="primary">tuf</name>
    <name type="ordered locus">PMM1508</name>
</gene>
<proteinExistence type="inferred from homology"/>
<protein>
    <recommendedName>
        <fullName evidence="2">Elongation factor Tu</fullName>
        <shortName evidence="2">EF-Tu</shortName>
        <ecNumber evidence="2">3.6.5.3</ecNumber>
    </recommendedName>
</protein>